<proteinExistence type="evidence at protein level"/>
<comment type="function">
    <text evidence="5">Endo-1,4-beta-xylanase involved in the hydrolysis of xylan, a major structural heterogeneous polysaccharide found in plant biomass representing the second most abundant polysaccharide in the biosphere, after cellulose. The most favorable substrate is beechwood xylan.</text>
</comment>
<comment type="catalytic activity">
    <reaction evidence="5">
        <text>Endohydrolysis of (1-&gt;4)-beta-D-xylosidic linkages in xylans.</text>
        <dbReference type="EC" id="3.2.1.8"/>
    </reaction>
</comment>
<comment type="biophysicochemical properties">
    <phDependence>
        <text evidence="5">Optimum pH is 6.0.</text>
    </phDependence>
    <temperatureDependence>
        <text evidence="5">Optimum temperature is 45 degrees Celsius.</text>
    </temperatureDependence>
</comment>
<comment type="pathway">
    <text>Glycan degradation; xylan degradation.</text>
</comment>
<comment type="subcellular location">
    <subcellularLocation>
        <location evidence="5">Secreted</location>
    </subcellularLocation>
</comment>
<comment type="similarity">
    <text evidence="6">Belongs to the glycosyl hydrolase 11 (cellulase G) family.</text>
</comment>
<feature type="signal peptide" evidence="1">
    <location>
        <begin position="1"/>
        <end position="19"/>
    </location>
</feature>
<feature type="chain" id="PRO_0000429616" description="Endo-1,4-beta-xylanase G">
    <location>
        <begin position="20"/>
        <end position="250"/>
    </location>
</feature>
<feature type="domain" description="GH11" evidence="2">
    <location>
        <begin position="43"/>
        <end position="231"/>
    </location>
</feature>
<feature type="active site" description="Nucleophile" evidence="3">
    <location>
        <position position="127"/>
    </location>
</feature>
<feature type="active site" description="Proton donor" evidence="4">
    <location>
        <position position="218"/>
    </location>
</feature>
<feature type="glycosylation site" description="N-linked (GlcNAc...) asparagine" evidence="1">
    <location>
        <position position="31"/>
    </location>
</feature>
<reference key="1">
    <citation type="journal article" date="2008" name="Wei Sheng Wu Xue Bao">
        <title>Molecular cloning and heterologous expression of a new xylanase gene from Verticillium dahliae.</title>
        <authorList>
            <person name="Zhang G."/>
            <person name="Rao B."/>
            <person name="Ye J."/>
            <person name="Ma L."/>
            <person name="Zhang X."/>
        </authorList>
    </citation>
    <scope>NUCLEOTIDE SEQUENCE [GENOMIC DNA]</scope>
    <scope>SUBCELLULAR LOCATION</scope>
    <scope>FUNCTION</scope>
    <scope>CATALYTIC ACTIVITY</scope>
    <scope>BIOPHYSICOCHEMICAL PROPERTIES</scope>
</reference>
<dbReference type="EC" id="3.2.1.8"/>
<dbReference type="EMBL" id="DQ449069">
    <property type="protein sequence ID" value="ABE02800.1"/>
    <property type="molecule type" value="Genomic_DNA"/>
</dbReference>
<dbReference type="SMR" id="Q0ZHI9"/>
<dbReference type="CAZy" id="GH11">
    <property type="family name" value="Glycoside Hydrolase Family 11"/>
</dbReference>
<dbReference type="GlyCosmos" id="Q0ZHI9">
    <property type="glycosylation" value="1 site, No reported glycans"/>
</dbReference>
<dbReference type="HOGENOM" id="CLU_052631_0_0_1"/>
<dbReference type="UniPathway" id="UPA00114"/>
<dbReference type="GO" id="GO:0005576">
    <property type="term" value="C:extracellular region"/>
    <property type="evidence" value="ECO:0007669"/>
    <property type="project" value="UniProtKB-SubCell"/>
</dbReference>
<dbReference type="GO" id="GO:0031176">
    <property type="term" value="F:endo-1,4-beta-xylanase activity"/>
    <property type="evidence" value="ECO:0007669"/>
    <property type="project" value="UniProtKB-EC"/>
</dbReference>
<dbReference type="GO" id="GO:0045493">
    <property type="term" value="P:xylan catabolic process"/>
    <property type="evidence" value="ECO:0007669"/>
    <property type="project" value="UniProtKB-UniPathway"/>
</dbReference>
<dbReference type="FunFam" id="2.60.120.180:FF:000001">
    <property type="entry name" value="Endo-1,4-beta-xylanase"/>
    <property type="match status" value="1"/>
</dbReference>
<dbReference type="Gene3D" id="2.60.120.180">
    <property type="match status" value="1"/>
</dbReference>
<dbReference type="InterPro" id="IPR013320">
    <property type="entry name" value="ConA-like_dom_sf"/>
</dbReference>
<dbReference type="InterPro" id="IPR013319">
    <property type="entry name" value="GH11/12"/>
</dbReference>
<dbReference type="InterPro" id="IPR018208">
    <property type="entry name" value="GH11_AS_1"/>
</dbReference>
<dbReference type="InterPro" id="IPR033119">
    <property type="entry name" value="GH11_AS_2"/>
</dbReference>
<dbReference type="InterPro" id="IPR033123">
    <property type="entry name" value="GH11_dom"/>
</dbReference>
<dbReference type="InterPro" id="IPR001137">
    <property type="entry name" value="Glyco_hydro_11"/>
</dbReference>
<dbReference type="PANTHER" id="PTHR46828">
    <property type="entry name" value="ENDO-1,4-BETA-XYLANASE A-RELATED"/>
    <property type="match status" value="1"/>
</dbReference>
<dbReference type="PANTHER" id="PTHR46828:SF2">
    <property type="entry name" value="ENDO-1,4-BETA-XYLANASE A-RELATED"/>
    <property type="match status" value="1"/>
</dbReference>
<dbReference type="Pfam" id="PF00457">
    <property type="entry name" value="Glyco_hydro_11"/>
    <property type="match status" value="1"/>
</dbReference>
<dbReference type="PRINTS" id="PR00911">
    <property type="entry name" value="GLHYDRLASE11"/>
</dbReference>
<dbReference type="SUPFAM" id="SSF49899">
    <property type="entry name" value="Concanavalin A-like lectins/glucanases"/>
    <property type="match status" value="1"/>
</dbReference>
<dbReference type="PROSITE" id="PS00776">
    <property type="entry name" value="GH11_1"/>
    <property type="match status" value="1"/>
</dbReference>
<dbReference type="PROSITE" id="PS00777">
    <property type="entry name" value="GH11_2"/>
    <property type="match status" value="1"/>
</dbReference>
<dbReference type="PROSITE" id="PS51761">
    <property type="entry name" value="GH11_3"/>
    <property type="match status" value="1"/>
</dbReference>
<evidence type="ECO:0000255" key="1"/>
<evidence type="ECO:0000255" key="2">
    <source>
        <dbReference type="PROSITE-ProRule" id="PRU01097"/>
    </source>
</evidence>
<evidence type="ECO:0000255" key="3">
    <source>
        <dbReference type="PROSITE-ProRule" id="PRU10062"/>
    </source>
</evidence>
<evidence type="ECO:0000255" key="4">
    <source>
        <dbReference type="PROSITE-ProRule" id="PRU10063"/>
    </source>
</evidence>
<evidence type="ECO:0000269" key="5">
    <source>
    </source>
</evidence>
<evidence type="ECO:0000305" key="6"/>
<keyword id="KW-0119">Carbohydrate metabolism</keyword>
<keyword id="KW-0325">Glycoprotein</keyword>
<keyword id="KW-0326">Glycosidase</keyword>
<keyword id="KW-0378">Hydrolase</keyword>
<keyword id="KW-0624">Polysaccharide degradation</keyword>
<keyword id="KW-0964">Secreted</keyword>
<keyword id="KW-0732">Signal</keyword>
<keyword id="KW-0858">Xylan degradation</keyword>
<sequence>MVSFKSLLLAASAFTAVLGRPFDSFDGPDVNITDADELLVRRQVTANSEGTHNGYFYSWWSDGGGQVTYTMGAGSRYSVTWKDTGNFVGGKGWNPGTGRTINYGGSFSPQGNGYLAVYGWTRNPLIEYYVVESYGTYNPGSGGQLKGTVTTDGGTYNVYVSTRTNQPSIDGTRTFQQYWSVRTSKRVGGAVTMQNHFNAWAQFGMNLGAHYYQIVATEGYQSSGPSDIYVQTQCKSLCDRGRVTWRDVVC</sequence>
<gene>
    <name type="primary">xynG</name>
</gene>
<organism>
    <name type="scientific">Verticillium dahliae</name>
    <name type="common">Verticillium wilt</name>
    <dbReference type="NCBI Taxonomy" id="27337"/>
    <lineage>
        <taxon>Eukaryota</taxon>
        <taxon>Fungi</taxon>
        <taxon>Dikarya</taxon>
        <taxon>Ascomycota</taxon>
        <taxon>Pezizomycotina</taxon>
        <taxon>Sordariomycetes</taxon>
        <taxon>Hypocreomycetidae</taxon>
        <taxon>Glomerellales</taxon>
        <taxon>Plectosphaerellaceae</taxon>
        <taxon>Verticillium</taxon>
    </lineage>
</organism>
<protein>
    <recommendedName>
        <fullName>Endo-1,4-beta-xylanase G</fullName>
        <shortName>Xylanase G</shortName>
        <ecNumber>3.2.1.8</ecNumber>
    </recommendedName>
    <alternativeName>
        <fullName>1,4-beta-D-xylan xylanohydrolase G</fullName>
    </alternativeName>
</protein>
<accession>Q0ZHI9</accession>
<name>XYNG_VERDA</name>